<keyword id="KW-0119">Carbohydrate metabolism</keyword>
<keyword id="KW-0326">Glycosidase</keyword>
<keyword id="KW-0378">Hydrolase</keyword>
<keyword id="KW-1185">Reference proteome</keyword>
<organism>
    <name type="scientific">Bacillus subtilis (strain 168)</name>
    <dbReference type="NCBI Taxonomy" id="224308"/>
    <lineage>
        <taxon>Bacteria</taxon>
        <taxon>Bacillati</taxon>
        <taxon>Bacillota</taxon>
        <taxon>Bacilli</taxon>
        <taxon>Bacillales</taxon>
        <taxon>Bacillaceae</taxon>
        <taxon>Bacillus</taxon>
    </lineage>
</organism>
<feature type="chain" id="PRO_0000169870" description="Sucrose-6-phosphate hydrolase">
    <location>
        <begin position="1"/>
        <end position="479"/>
    </location>
</feature>
<feature type="region of interest" description="Disordered" evidence="3">
    <location>
        <begin position="1"/>
        <end position="28"/>
    </location>
</feature>
<feature type="active site" evidence="2">
    <location>
        <position position="43"/>
    </location>
</feature>
<feature type="binding site" evidence="1">
    <location>
        <begin position="40"/>
        <end position="43"/>
    </location>
    <ligand>
        <name>substrate</name>
    </ligand>
</feature>
<feature type="binding site" evidence="1">
    <location>
        <position position="59"/>
    </location>
    <ligand>
        <name>substrate</name>
    </ligand>
</feature>
<feature type="binding site" evidence="1">
    <location>
        <begin position="102"/>
        <end position="103"/>
    </location>
    <ligand>
        <name>substrate</name>
    </ligand>
</feature>
<feature type="binding site" evidence="1">
    <location>
        <begin position="161"/>
        <end position="162"/>
    </location>
    <ligand>
        <name>substrate</name>
    </ligand>
</feature>
<feature type="binding site" evidence="1">
    <location>
        <position position="220"/>
    </location>
    <ligand>
        <name>substrate</name>
    </ligand>
</feature>
<feature type="sequence conflict" description="In Ref. 1; AAA22723 and 2; CAA51606." evidence="5" ref="1 2">
    <original>GY</original>
    <variation>AIL</variation>
    <location>
        <begin position="155"/>
        <end position="156"/>
    </location>
</feature>
<feature type="sequence conflict" description="In Ref. 1; AAA22723 and 2; CAA51606." evidence="5" ref="1 2">
    <original>RDPK</original>
    <variation>SRSE</variation>
    <location>
        <begin position="161"/>
        <end position="164"/>
    </location>
</feature>
<feature type="sequence conflict" description="In Ref. 1; AAA22723 and 2; CAA51606." evidence="5" ref="1 2">
    <original>L</original>
    <variation>F</variation>
    <location>
        <position position="448"/>
    </location>
</feature>
<sequence length="479" mass="54814">MTAHDQELRRRAYEEVEKKEPIANSDPHRQHFHIMPPVGLLNDPNGVIYWKGSYHVFFQWQPFQTGHGAKFWGHYTTQDVVNWKREEIALAPSDWFDKNGCYSGSAVTKDDRLYLFYTGNVRDQDGNRETYQCLAVSDDGLSFEKKGVVARLPEGYTAHFRDPKVWEHEGTWYMVIGAQTENLKGQAVLFASDNLTEWRFLGPITGAGFNGLDDFGYMWECPDLFSLQGSDVLIVSPQGLEADGFRYQNVYQSGYFVGRLDYNKPELKHGEFTELDQGFDFYAPQTLEDDQGRRILFAWMAVPDQDEGSHPTIDCHWIHCMTLPRQLTLSGQKLIQQPLPELKAMRRNEKKIHINMHGSSGALPVEKPERTEILLEDIHTESGFSISIRGTATFSFHKDEGIVTLERKSFDGKRTEARHCRIKDLHTVHMFLDASSVEIFINNGEEVLSARYFPFPGNHEVTASATGKSEMNVGIWTLM</sequence>
<comment type="catalytic activity">
    <reaction evidence="2">
        <text>Hydrolysis of terminal non-reducing beta-D-fructofuranoside residues in beta-D-fructofuranosides.</text>
        <dbReference type="EC" id="3.2.1.26"/>
    </reaction>
</comment>
<comment type="pathway">
    <text>Glycan biosynthesis; sucrose metabolism.</text>
</comment>
<comment type="induction">
    <text evidence="4">Induced by sucrose (PubMed:2163394). Expression is regulated by the antiterminator SacT (PubMed:2163394).</text>
</comment>
<comment type="similarity">
    <text evidence="5">Belongs to the glycosyl hydrolase 32 family.</text>
</comment>
<reference key="1">
    <citation type="journal article" date="1986" name="Gene">
        <title>Nucleotide sequence of the sucrase gene of Bacillus subtilis.</title>
        <authorList>
            <person name="Fouet A."/>
            <person name="Klier A."/>
            <person name="Rapoport G."/>
        </authorList>
    </citation>
    <scope>NUCLEOTIDE SEQUENCE [GENOMIC DNA]</scope>
</reference>
<reference key="2">
    <citation type="journal article" date="1993" name="Mol. Microbiol.">
        <title>Bacillus subtilis genome project: cloning and sequencing of the 97 kb region from 325 degrees to 333 degrees.</title>
        <authorList>
            <person name="Glaser P."/>
            <person name="Kunst F."/>
            <person name="Arnaud M."/>
            <person name="Coudart M.P."/>
            <person name="Gonzales W."/>
            <person name="Hullo M.-F."/>
            <person name="Ionescu M."/>
            <person name="Lubochinsky B."/>
            <person name="Marcelino L."/>
            <person name="Moszer I."/>
            <person name="Presecan E."/>
            <person name="Santana M."/>
            <person name="Schneider E."/>
            <person name="Schweizer J."/>
            <person name="Vertes A."/>
            <person name="Rapoport G."/>
            <person name="Danchin A."/>
        </authorList>
    </citation>
    <scope>NUCLEOTIDE SEQUENCE [GENOMIC DNA]</scope>
    <source>
        <strain>168</strain>
    </source>
</reference>
<reference key="3">
    <citation type="journal article" date="1997" name="Nature">
        <title>The complete genome sequence of the Gram-positive bacterium Bacillus subtilis.</title>
        <authorList>
            <person name="Kunst F."/>
            <person name="Ogasawara N."/>
            <person name="Moszer I."/>
            <person name="Albertini A.M."/>
            <person name="Alloni G."/>
            <person name="Azevedo V."/>
            <person name="Bertero M.G."/>
            <person name="Bessieres P."/>
            <person name="Bolotin A."/>
            <person name="Borchert S."/>
            <person name="Borriss R."/>
            <person name="Boursier L."/>
            <person name="Brans A."/>
            <person name="Braun M."/>
            <person name="Brignell S.C."/>
            <person name="Bron S."/>
            <person name="Brouillet S."/>
            <person name="Bruschi C.V."/>
            <person name="Caldwell B."/>
            <person name="Capuano V."/>
            <person name="Carter N.M."/>
            <person name="Choi S.-K."/>
            <person name="Codani J.-J."/>
            <person name="Connerton I.F."/>
            <person name="Cummings N.J."/>
            <person name="Daniel R.A."/>
            <person name="Denizot F."/>
            <person name="Devine K.M."/>
            <person name="Duesterhoeft A."/>
            <person name="Ehrlich S.D."/>
            <person name="Emmerson P.T."/>
            <person name="Entian K.-D."/>
            <person name="Errington J."/>
            <person name="Fabret C."/>
            <person name="Ferrari E."/>
            <person name="Foulger D."/>
            <person name="Fritz C."/>
            <person name="Fujita M."/>
            <person name="Fujita Y."/>
            <person name="Fuma S."/>
            <person name="Galizzi A."/>
            <person name="Galleron N."/>
            <person name="Ghim S.-Y."/>
            <person name="Glaser P."/>
            <person name="Goffeau A."/>
            <person name="Golightly E.J."/>
            <person name="Grandi G."/>
            <person name="Guiseppi G."/>
            <person name="Guy B.J."/>
            <person name="Haga K."/>
            <person name="Haiech J."/>
            <person name="Harwood C.R."/>
            <person name="Henaut A."/>
            <person name="Hilbert H."/>
            <person name="Holsappel S."/>
            <person name="Hosono S."/>
            <person name="Hullo M.-F."/>
            <person name="Itaya M."/>
            <person name="Jones L.-M."/>
            <person name="Joris B."/>
            <person name="Karamata D."/>
            <person name="Kasahara Y."/>
            <person name="Klaerr-Blanchard M."/>
            <person name="Klein C."/>
            <person name="Kobayashi Y."/>
            <person name="Koetter P."/>
            <person name="Koningstein G."/>
            <person name="Krogh S."/>
            <person name="Kumano M."/>
            <person name="Kurita K."/>
            <person name="Lapidus A."/>
            <person name="Lardinois S."/>
            <person name="Lauber J."/>
            <person name="Lazarevic V."/>
            <person name="Lee S.-M."/>
            <person name="Levine A."/>
            <person name="Liu H."/>
            <person name="Masuda S."/>
            <person name="Mauel C."/>
            <person name="Medigue C."/>
            <person name="Medina N."/>
            <person name="Mellado R.P."/>
            <person name="Mizuno M."/>
            <person name="Moestl D."/>
            <person name="Nakai S."/>
            <person name="Noback M."/>
            <person name="Noone D."/>
            <person name="O'Reilly M."/>
            <person name="Ogawa K."/>
            <person name="Ogiwara A."/>
            <person name="Oudega B."/>
            <person name="Park S.-H."/>
            <person name="Parro V."/>
            <person name="Pohl T.M."/>
            <person name="Portetelle D."/>
            <person name="Porwollik S."/>
            <person name="Prescott A.M."/>
            <person name="Presecan E."/>
            <person name="Pujic P."/>
            <person name="Purnelle B."/>
            <person name="Rapoport G."/>
            <person name="Rey M."/>
            <person name="Reynolds S."/>
            <person name="Rieger M."/>
            <person name="Rivolta C."/>
            <person name="Rocha E."/>
            <person name="Roche B."/>
            <person name="Rose M."/>
            <person name="Sadaie Y."/>
            <person name="Sato T."/>
            <person name="Scanlan E."/>
            <person name="Schleich S."/>
            <person name="Schroeter R."/>
            <person name="Scoffone F."/>
            <person name="Sekiguchi J."/>
            <person name="Sekowska A."/>
            <person name="Seror S.J."/>
            <person name="Serror P."/>
            <person name="Shin B.-S."/>
            <person name="Soldo B."/>
            <person name="Sorokin A."/>
            <person name="Tacconi E."/>
            <person name="Takagi T."/>
            <person name="Takahashi H."/>
            <person name="Takemaru K."/>
            <person name="Takeuchi M."/>
            <person name="Tamakoshi A."/>
            <person name="Tanaka T."/>
            <person name="Terpstra P."/>
            <person name="Tognoni A."/>
            <person name="Tosato V."/>
            <person name="Uchiyama S."/>
            <person name="Vandenbol M."/>
            <person name="Vannier F."/>
            <person name="Vassarotti A."/>
            <person name="Viari A."/>
            <person name="Wambutt R."/>
            <person name="Wedler E."/>
            <person name="Wedler H."/>
            <person name="Weitzenegger T."/>
            <person name="Winters P."/>
            <person name="Wipat A."/>
            <person name="Yamamoto H."/>
            <person name="Yamane K."/>
            <person name="Yasumoto K."/>
            <person name="Yata K."/>
            <person name="Yoshida K."/>
            <person name="Yoshikawa H.-F."/>
            <person name="Zumstein E."/>
            <person name="Yoshikawa H."/>
            <person name="Danchin A."/>
        </authorList>
    </citation>
    <scope>NUCLEOTIDE SEQUENCE [LARGE SCALE GENOMIC DNA]</scope>
    <source>
        <strain>168</strain>
    </source>
</reference>
<reference key="4">
    <citation type="journal article" date="2009" name="Microbiology">
        <title>From a consortium sequence to a unified sequence: the Bacillus subtilis 168 reference genome a decade later.</title>
        <authorList>
            <person name="Barbe V."/>
            <person name="Cruveiller S."/>
            <person name="Kunst F."/>
            <person name="Lenoble P."/>
            <person name="Meurice G."/>
            <person name="Sekowska A."/>
            <person name="Vallenet D."/>
            <person name="Wang T."/>
            <person name="Moszer I."/>
            <person name="Medigue C."/>
            <person name="Danchin A."/>
        </authorList>
    </citation>
    <scope>SEQUENCE REVISION TO 155-156; 161-164 AND 448</scope>
</reference>
<reference key="5">
    <citation type="journal article" date="1987" name="Proc. Natl. Acad. Sci. U.S.A.">
        <title>Bacillus subtilis sucrose-specific enzyme II of the phosphotransferase system: expression in Escherichia coli and homology to enzymes II from enteric bacteria.</title>
        <authorList>
            <person name="Fouet A."/>
            <person name="Arnaud M."/>
            <person name="Klier A."/>
            <person name="Rapoport G."/>
        </authorList>
    </citation>
    <scope>NUCLEOTIDE SEQUENCE [GENOMIC DNA] OF 1-44</scope>
</reference>
<reference key="6">
    <citation type="journal article" date="1990" name="J. Bacteriol.">
        <title>The sacT gene regulating the sacPA operon in Bacillus subtilis shares strong homology with transcriptional antiterminators.</title>
        <authorList>
            <person name="Debarbouille M."/>
            <person name="Arnaud M."/>
            <person name="Fouet A."/>
            <person name="Klier A."/>
            <person name="Rapoport G."/>
        </authorList>
    </citation>
    <scope>INDUCTION</scope>
</reference>
<proteinExistence type="evidence at transcript level"/>
<dbReference type="EC" id="3.2.1.26"/>
<dbReference type="EMBL" id="M15662">
    <property type="protein sequence ID" value="AAA22723.1"/>
    <property type="molecule type" value="Genomic_DNA"/>
</dbReference>
<dbReference type="EMBL" id="X73124">
    <property type="protein sequence ID" value="CAA51606.1"/>
    <property type="molecule type" value="Genomic_DNA"/>
</dbReference>
<dbReference type="EMBL" id="AL009126">
    <property type="protein sequence ID" value="CAB15830.2"/>
    <property type="molecule type" value="Genomic_DNA"/>
</dbReference>
<dbReference type="EMBL" id="J03006">
    <property type="protein sequence ID" value="AAA22728.1"/>
    <property type="molecule type" value="Genomic_DNA"/>
</dbReference>
<dbReference type="PIR" id="A25562">
    <property type="entry name" value="A25562"/>
</dbReference>
<dbReference type="RefSeq" id="NP_391683.2">
    <property type="nucleotide sequence ID" value="NC_000964.3"/>
</dbReference>
<dbReference type="RefSeq" id="WP_010886636.1">
    <property type="nucleotide sequence ID" value="NZ_OZ025638.1"/>
</dbReference>
<dbReference type="SMR" id="P07819"/>
<dbReference type="FunCoup" id="P07819">
    <property type="interactions" value="102"/>
</dbReference>
<dbReference type="STRING" id="224308.BSU38040"/>
<dbReference type="CAZy" id="GH32">
    <property type="family name" value="Glycoside Hydrolase Family 32"/>
</dbReference>
<dbReference type="PaxDb" id="224308-BSU38040"/>
<dbReference type="EnsemblBacteria" id="CAB15830">
    <property type="protein sequence ID" value="CAB15830"/>
    <property type="gene ID" value="BSU_38040"/>
</dbReference>
<dbReference type="GeneID" id="937277"/>
<dbReference type="KEGG" id="bsu:BSU38040"/>
<dbReference type="PATRIC" id="fig|224308.179.peg.4118"/>
<dbReference type="eggNOG" id="COG1621">
    <property type="taxonomic scope" value="Bacteria"/>
</dbReference>
<dbReference type="InParanoid" id="P07819"/>
<dbReference type="OrthoDB" id="9759709at2"/>
<dbReference type="PhylomeDB" id="P07819"/>
<dbReference type="BioCyc" id="BSUB:BSU38040-MONOMER"/>
<dbReference type="UniPathway" id="UPA00238"/>
<dbReference type="Proteomes" id="UP000001570">
    <property type="component" value="Chromosome"/>
</dbReference>
<dbReference type="GO" id="GO:0005737">
    <property type="term" value="C:cytoplasm"/>
    <property type="evidence" value="ECO:0007669"/>
    <property type="project" value="InterPro"/>
</dbReference>
<dbReference type="GO" id="GO:0004564">
    <property type="term" value="F:beta-fructofuranosidase activity"/>
    <property type="evidence" value="ECO:0007669"/>
    <property type="project" value="UniProtKB-EC"/>
</dbReference>
<dbReference type="GO" id="GO:0005985">
    <property type="term" value="P:sucrose metabolic process"/>
    <property type="evidence" value="ECO:0007669"/>
    <property type="project" value="UniProtKB-UniPathway"/>
</dbReference>
<dbReference type="CDD" id="cd18623">
    <property type="entry name" value="GH32_ScrB-like"/>
    <property type="match status" value="1"/>
</dbReference>
<dbReference type="Gene3D" id="2.60.120.560">
    <property type="entry name" value="Exo-inulinase, domain 1"/>
    <property type="match status" value="1"/>
</dbReference>
<dbReference type="Gene3D" id="2.115.10.20">
    <property type="entry name" value="Glycosyl hydrolase domain, family 43"/>
    <property type="match status" value="1"/>
</dbReference>
<dbReference type="InterPro" id="IPR013320">
    <property type="entry name" value="ConA-like_dom_sf"/>
</dbReference>
<dbReference type="InterPro" id="IPR051214">
    <property type="entry name" value="GH32_Enzymes"/>
</dbReference>
<dbReference type="InterPro" id="IPR001362">
    <property type="entry name" value="Glyco_hydro_32"/>
</dbReference>
<dbReference type="InterPro" id="IPR018053">
    <property type="entry name" value="Glyco_hydro_32_AS"/>
</dbReference>
<dbReference type="InterPro" id="IPR013189">
    <property type="entry name" value="Glyco_hydro_32_C"/>
</dbReference>
<dbReference type="InterPro" id="IPR013148">
    <property type="entry name" value="Glyco_hydro_32_N"/>
</dbReference>
<dbReference type="InterPro" id="IPR023296">
    <property type="entry name" value="Glyco_hydro_beta-prop_sf"/>
</dbReference>
<dbReference type="InterPro" id="IPR006232">
    <property type="entry name" value="Suc6P_hydrolase"/>
</dbReference>
<dbReference type="NCBIfam" id="TIGR01322">
    <property type="entry name" value="scrB_fam"/>
    <property type="match status" value="1"/>
</dbReference>
<dbReference type="PANTHER" id="PTHR43101">
    <property type="entry name" value="BETA-FRUCTOSIDASE"/>
    <property type="match status" value="1"/>
</dbReference>
<dbReference type="PANTHER" id="PTHR43101:SF1">
    <property type="entry name" value="BETA-FRUCTOSIDASE"/>
    <property type="match status" value="1"/>
</dbReference>
<dbReference type="Pfam" id="PF08244">
    <property type="entry name" value="Glyco_hydro_32C"/>
    <property type="match status" value="1"/>
</dbReference>
<dbReference type="Pfam" id="PF00251">
    <property type="entry name" value="Glyco_hydro_32N"/>
    <property type="match status" value="1"/>
</dbReference>
<dbReference type="SMART" id="SM00640">
    <property type="entry name" value="Glyco_32"/>
    <property type="match status" value="1"/>
</dbReference>
<dbReference type="SUPFAM" id="SSF75005">
    <property type="entry name" value="Arabinanase/levansucrase/invertase"/>
    <property type="match status" value="1"/>
</dbReference>
<dbReference type="SUPFAM" id="SSF49899">
    <property type="entry name" value="Concanavalin A-like lectins/glucanases"/>
    <property type="match status" value="1"/>
</dbReference>
<dbReference type="PROSITE" id="PS00609">
    <property type="entry name" value="GLYCOSYL_HYDROL_F32"/>
    <property type="match status" value="1"/>
</dbReference>
<gene>
    <name type="primary">sacA</name>
    <name type="ordered locus">BSU38040</name>
    <name type="ORF">ipa-50d</name>
</gene>
<accession>P07819</accession>
<evidence type="ECO:0000250" key="1"/>
<evidence type="ECO:0000255" key="2">
    <source>
        <dbReference type="PROSITE-ProRule" id="PRU10067"/>
    </source>
</evidence>
<evidence type="ECO:0000256" key="3">
    <source>
        <dbReference type="SAM" id="MobiDB-lite"/>
    </source>
</evidence>
<evidence type="ECO:0000269" key="4">
    <source>
    </source>
</evidence>
<evidence type="ECO:0000305" key="5"/>
<protein>
    <recommendedName>
        <fullName>Sucrose-6-phosphate hydrolase</fullName>
        <shortName>Sucrase</shortName>
        <ecNumber>3.2.1.26</ecNumber>
    </recommendedName>
    <alternativeName>
        <fullName>Invertase</fullName>
    </alternativeName>
</protein>
<name>SCRB_BACSU</name>